<reference key="1">
    <citation type="journal article" date="1990" name="Plasmid">
        <title>Cloning and sequence of IS1000, a putative insertion sequence from Thermus thermophilus HB8.</title>
        <authorList>
            <person name="Ashby M.K."/>
            <person name="Bergquist P.L."/>
        </authorList>
    </citation>
    <scope>NUCLEOTIDE SEQUENCE [GENOMIC DNA]</scope>
</reference>
<reference key="2">
    <citation type="submission" date="2004-11" db="EMBL/GenBank/DDBJ databases">
        <title>Complete genome sequence of Thermus thermophilus HB8.</title>
        <authorList>
            <person name="Masui R."/>
            <person name="Kurokawa K."/>
            <person name="Nakagawa N."/>
            <person name="Tokunaga F."/>
            <person name="Koyama Y."/>
            <person name="Shibata T."/>
            <person name="Oshima T."/>
            <person name="Yokoyama S."/>
            <person name="Yasunaga T."/>
            <person name="Kuramitsu S."/>
        </authorList>
    </citation>
    <scope>NUCLEOTIDE SEQUENCE [LARGE SCALE GENOMIC DNA]</scope>
    <source>
        <strain>ATCC 27634 / DSM 579 / HB8</strain>
    </source>
</reference>
<dbReference type="EMBL" id="M33159">
    <property type="protein sequence ID" value="AAA27496.1"/>
    <property type="molecule type" value="Genomic_DNA"/>
</dbReference>
<dbReference type="EMBL" id="AP008226">
    <property type="protein sequence ID" value="BAD70747.1"/>
    <property type="molecule type" value="Genomic_DNA"/>
</dbReference>
<dbReference type="RefSeq" id="YP_144190.1">
    <property type="nucleotide sequence ID" value="NC_006461.1"/>
</dbReference>
<dbReference type="SMR" id="Q56419"/>
<dbReference type="EnsemblBacteria" id="BAD70747">
    <property type="protein sequence ID" value="BAD70747"/>
    <property type="gene ID" value="BAD70747"/>
</dbReference>
<dbReference type="KEGG" id="ttj:TTHA0924"/>
<dbReference type="PATRIC" id="fig|300852.9.peg.907"/>
<dbReference type="eggNOG" id="COG1355">
    <property type="taxonomic scope" value="Bacteria"/>
</dbReference>
<dbReference type="HOGENOM" id="CLU_055281_0_0_0"/>
<dbReference type="Proteomes" id="UP000000532">
    <property type="component" value="Chromosome"/>
</dbReference>
<dbReference type="CDD" id="cd07361">
    <property type="entry name" value="MEMO_like"/>
    <property type="match status" value="1"/>
</dbReference>
<dbReference type="Gene3D" id="3.40.830.10">
    <property type="entry name" value="LigB-like"/>
    <property type="match status" value="1"/>
</dbReference>
<dbReference type="InterPro" id="IPR002737">
    <property type="entry name" value="MEMO1_fam"/>
</dbReference>
<dbReference type="NCBIfam" id="TIGR04336">
    <property type="entry name" value="AmmeMemoSam_B"/>
    <property type="match status" value="1"/>
</dbReference>
<dbReference type="PANTHER" id="PTHR11060">
    <property type="entry name" value="PROTEIN MEMO1"/>
    <property type="match status" value="1"/>
</dbReference>
<dbReference type="PANTHER" id="PTHR11060:SF0">
    <property type="entry name" value="PROTEIN MEMO1"/>
    <property type="match status" value="1"/>
</dbReference>
<dbReference type="Pfam" id="PF01875">
    <property type="entry name" value="Memo"/>
    <property type="match status" value="1"/>
</dbReference>
<protein>
    <recommendedName>
        <fullName>MEMO1 family protein TTHA0924</fullName>
    </recommendedName>
</protein>
<proteinExistence type="inferred from homology"/>
<sequence length="326" mass="36021">MEGRTLEEVQEEVFKRHGVLVPKKELEDLAKALEEAGLLLTEKVEARLKEEEEKLKRERPMRLAGLSYPEGEREARAFLEAFRASYPGEGEEARVLLMPHLEPSRVPEVYGAALAALEKTPPPERIYLVGVAHRPLKEKAAALPVPFQTPFGPALPDLPALQALDALLPFELFNTPLAFREEHSLELPLFFLKGRFPEARVLPLLVARRSPELGEALKVVLRDFPGLLVLAVDLSHVGPRFGDTPLTRTLAEEARRRDLGFLERLAEGEPEAALAFLGANPTRIDGVEVVASLLPLLRERKGKVLAHRLDLEAPTLSAVGAGTLVL</sequence>
<feature type="chain" id="PRO_0000134375" description="MEMO1 family protein TTHA0924">
    <location>
        <begin position="1"/>
        <end position="326"/>
    </location>
</feature>
<accession>Q56419</accession>
<accession>Q5SJT4</accession>
<organism>
    <name type="scientific">Thermus thermophilus (strain ATCC 27634 / DSM 579 / HB8)</name>
    <dbReference type="NCBI Taxonomy" id="300852"/>
    <lineage>
        <taxon>Bacteria</taxon>
        <taxon>Thermotogati</taxon>
        <taxon>Deinococcota</taxon>
        <taxon>Deinococci</taxon>
        <taxon>Thermales</taxon>
        <taxon>Thermaceae</taxon>
        <taxon>Thermus</taxon>
    </lineage>
</organism>
<evidence type="ECO:0000305" key="1"/>
<comment type="similarity">
    <text evidence="1">Belongs to the MEMO1 family.</text>
</comment>
<gene>
    <name type="ordered locus">TTHA0924</name>
</gene>
<keyword id="KW-1185">Reference proteome</keyword>
<name>Y924_THET8</name>